<organism>
    <name type="scientific">Actinobacillus pleuropneumoniae serotype 5b (strain L20)</name>
    <dbReference type="NCBI Taxonomy" id="416269"/>
    <lineage>
        <taxon>Bacteria</taxon>
        <taxon>Pseudomonadati</taxon>
        <taxon>Pseudomonadota</taxon>
        <taxon>Gammaproteobacteria</taxon>
        <taxon>Pasteurellales</taxon>
        <taxon>Pasteurellaceae</taxon>
        <taxon>Actinobacillus</taxon>
    </lineage>
</organism>
<reference key="1">
    <citation type="journal article" date="2008" name="J. Bacteriol.">
        <title>The complete genome sequence of Actinobacillus pleuropneumoniae L20 (serotype 5b).</title>
        <authorList>
            <person name="Foote S.J."/>
            <person name="Bosse J.T."/>
            <person name="Bouevitch A.B."/>
            <person name="Langford P.R."/>
            <person name="Young N.M."/>
            <person name="Nash J.H.E."/>
        </authorList>
    </citation>
    <scope>NUCLEOTIDE SEQUENCE [LARGE SCALE GENOMIC DNA]</scope>
    <source>
        <strain>L20</strain>
    </source>
</reference>
<name>ACCA_ACTP2</name>
<protein>
    <recommendedName>
        <fullName evidence="1">Acetyl-coenzyme A carboxylase carboxyl transferase subunit alpha</fullName>
        <shortName evidence="1">ACCase subunit alpha</shortName>
        <shortName evidence="1">Acetyl-CoA carboxylase carboxyltransferase subunit alpha</shortName>
        <ecNumber evidence="1">2.1.3.15</ecNumber>
    </recommendedName>
</protein>
<comment type="function">
    <text evidence="1">Component of the acetyl coenzyme A carboxylase (ACC) complex. First, biotin carboxylase catalyzes the carboxylation of biotin on its carrier protein (BCCP) and then the CO(2) group is transferred by the carboxyltransferase to acetyl-CoA to form malonyl-CoA.</text>
</comment>
<comment type="catalytic activity">
    <reaction evidence="1">
        <text>N(6)-carboxybiotinyl-L-lysyl-[protein] + acetyl-CoA = N(6)-biotinyl-L-lysyl-[protein] + malonyl-CoA</text>
        <dbReference type="Rhea" id="RHEA:54728"/>
        <dbReference type="Rhea" id="RHEA-COMP:10505"/>
        <dbReference type="Rhea" id="RHEA-COMP:10506"/>
        <dbReference type="ChEBI" id="CHEBI:57288"/>
        <dbReference type="ChEBI" id="CHEBI:57384"/>
        <dbReference type="ChEBI" id="CHEBI:83144"/>
        <dbReference type="ChEBI" id="CHEBI:83145"/>
        <dbReference type="EC" id="2.1.3.15"/>
    </reaction>
</comment>
<comment type="pathway">
    <text evidence="1">Lipid metabolism; malonyl-CoA biosynthesis; malonyl-CoA from acetyl-CoA: step 1/1.</text>
</comment>
<comment type="subunit">
    <text evidence="1">Acetyl-CoA carboxylase is a heterohexamer composed of biotin carboxyl carrier protein (AccB), biotin carboxylase (AccC) and two subunits each of ACCase subunit alpha (AccA) and ACCase subunit beta (AccD).</text>
</comment>
<comment type="subcellular location">
    <subcellularLocation>
        <location evidence="1">Cytoplasm</location>
    </subcellularLocation>
</comment>
<comment type="similarity">
    <text evidence="1">Belongs to the AccA family.</text>
</comment>
<accession>A3N2D4</accession>
<gene>
    <name evidence="1" type="primary">accA</name>
    <name type="ordered locus">APL_1486</name>
</gene>
<sequence length="317" mass="35191">MSQEYLDFELPIAELEAKIESLRAVSEQDGKIDLDDEIKRLQKKSEELTKKTFANLDAWQVSRMARHPNRPYTLDYIEHIFTEFDELAGDRAFADDKAIVGGIARLDGRPVMVIGHQKGRTTKEKVRRNFGMPAPEGYRKALRLMEMADRFNMPIITFIDTPGAYPGIGAEERGQAEAIARNLREMAQLKVPVICTVIGEGGSGGALAIGVGDKVNMLQYSTYSVISPEGCASILWKSAEKASTAAEVMGLTAQRLKELNLIDSIVAEPLGGAHRDVAQMAENLKQQILADLQDLAPLSTEDLLDRRYQRLMSYGYV</sequence>
<dbReference type="EC" id="2.1.3.15" evidence="1"/>
<dbReference type="EMBL" id="CP000569">
    <property type="protein sequence ID" value="ABN74570.1"/>
    <property type="molecule type" value="Genomic_DNA"/>
</dbReference>
<dbReference type="RefSeq" id="WP_005598724.1">
    <property type="nucleotide sequence ID" value="NC_009053.1"/>
</dbReference>
<dbReference type="SMR" id="A3N2D4"/>
<dbReference type="STRING" id="416269.APL_1486"/>
<dbReference type="EnsemblBacteria" id="ABN74570">
    <property type="protein sequence ID" value="ABN74570"/>
    <property type="gene ID" value="APL_1486"/>
</dbReference>
<dbReference type="GeneID" id="48599753"/>
<dbReference type="KEGG" id="apl:APL_1486"/>
<dbReference type="eggNOG" id="COG0825">
    <property type="taxonomic scope" value="Bacteria"/>
</dbReference>
<dbReference type="HOGENOM" id="CLU_015486_0_2_6"/>
<dbReference type="UniPathway" id="UPA00655">
    <property type="reaction ID" value="UER00711"/>
</dbReference>
<dbReference type="Proteomes" id="UP000001432">
    <property type="component" value="Chromosome"/>
</dbReference>
<dbReference type="GO" id="GO:0009317">
    <property type="term" value="C:acetyl-CoA carboxylase complex"/>
    <property type="evidence" value="ECO:0007669"/>
    <property type="project" value="InterPro"/>
</dbReference>
<dbReference type="GO" id="GO:0003989">
    <property type="term" value="F:acetyl-CoA carboxylase activity"/>
    <property type="evidence" value="ECO:0007669"/>
    <property type="project" value="InterPro"/>
</dbReference>
<dbReference type="GO" id="GO:0005524">
    <property type="term" value="F:ATP binding"/>
    <property type="evidence" value="ECO:0007669"/>
    <property type="project" value="UniProtKB-KW"/>
</dbReference>
<dbReference type="GO" id="GO:0016743">
    <property type="term" value="F:carboxyl- or carbamoyltransferase activity"/>
    <property type="evidence" value="ECO:0007669"/>
    <property type="project" value="UniProtKB-UniRule"/>
</dbReference>
<dbReference type="GO" id="GO:0006633">
    <property type="term" value="P:fatty acid biosynthetic process"/>
    <property type="evidence" value="ECO:0007669"/>
    <property type="project" value="UniProtKB-KW"/>
</dbReference>
<dbReference type="GO" id="GO:2001295">
    <property type="term" value="P:malonyl-CoA biosynthetic process"/>
    <property type="evidence" value="ECO:0007669"/>
    <property type="project" value="UniProtKB-UniRule"/>
</dbReference>
<dbReference type="FunFam" id="3.90.226.10:FF:000008">
    <property type="entry name" value="Acetyl-coenzyme A carboxylase carboxyl transferase subunit alpha"/>
    <property type="match status" value="1"/>
</dbReference>
<dbReference type="Gene3D" id="3.90.226.10">
    <property type="entry name" value="2-enoyl-CoA Hydratase, Chain A, domain 1"/>
    <property type="match status" value="1"/>
</dbReference>
<dbReference type="HAMAP" id="MF_00823">
    <property type="entry name" value="AcetylCoA_CT_alpha"/>
    <property type="match status" value="1"/>
</dbReference>
<dbReference type="InterPro" id="IPR001095">
    <property type="entry name" value="Acetyl_CoA_COase_a_su"/>
</dbReference>
<dbReference type="InterPro" id="IPR029045">
    <property type="entry name" value="ClpP/crotonase-like_dom_sf"/>
</dbReference>
<dbReference type="InterPro" id="IPR011763">
    <property type="entry name" value="COA_CT_C"/>
</dbReference>
<dbReference type="NCBIfam" id="TIGR00513">
    <property type="entry name" value="accA"/>
    <property type="match status" value="1"/>
</dbReference>
<dbReference type="NCBIfam" id="NF041504">
    <property type="entry name" value="AccA_sub"/>
    <property type="match status" value="1"/>
</dbReference>
<dbReference type="NCBIfam" id="NF004344">
    <property type="entry name" value="PRK05724.1"/>
    <property type="match status" value="1"/>
</dbReference>
<dbReference type="PANTHER" id="PTHR42853">
    <property type="entry name" value="ACETYL-COENZYME A CARBOXYLASE CARBOXYL TRANSFERASE SUBUNIT ALPHA"/>
    <property type="match status" value="1"/>
</dbReference>
<dbReference type="PANTHER" id="PTHR42853:SF3">
    <property type="entry name" value="ACETYL-COENZYME A CARBOXYLASE CARBOXYL TRANSFERASE SUBUNIT ALPHA, CHLOROPLASTIC"/>
    <property type="match status" value="1"/>
</dbReference>
<dbReference type="Pfam" id="PF03255">
    <property type="entry name" value="ACCA"/>
    <property type="match status" value="1"/>
</dbReference>
<dbReference type="PRINTS" id="PR01069">
    <property type="entry name" value="ACCCTRFRASEA"/>
</dbReference>
<dbReference type="SUPFAM" id="SSF52096">
    <property type="entry name" value="ClpP/crotonase"/>
    <property type="match status" value="1"/>
</dbReference>
<dbReference type="PROSITE" id="PS50989">
    <property type="entry name" value="COA_CT_CTER"/>
    <property type="match status" value="1"/>
</dbReference>
<evidence type="ECO:0000255" key="1">
    <source>
        <dbReference type="HAMAP-Rule" id="MF_00823"/>
    </source>
</evidence>
<evidence type="ECO:0000255" key="2">
    <source>
        <dbReference type="PROSITE-ProRule" id="PRU01137"/>
    </source>
</evidence>
<keyword id="KW-0067">ATP-binding</keyword>
<keyword id="KW-0963">Cytoplasm</keyword>
<keyword id="KW-0275">Fatty acid biosynthesis</keyword>
<keyword id="KW-0276">Fatty acid metabolism</keyword>
<keyword id="KW-0444">Lipid biosynthesis</keyword>
<keyword id="KW-0443">Lipid metabolism</keyword>
<keyword id="KW-0547">Nucleotide-binding</keyword>
<keyword id="KW-1185">Reference proteome</keyword>
<keyword id="KW-0808">Transferase</keyword>
<proteinExistence type="inferred from homology"/>
<feature type="chain" id="PRO_1000062571" description="Acetyl-coenzyme A carboxylase carboxyl transferase subunit alpha">
    <location>
        <begin position="1"/>
        <end position="317"/>
    </location>
</feature>
<feature type="domain" description="CoA carboxyltransferase C-terminal" evidence="2">
    <location>
        <begin position="40"/>
        <end position="294"/>
    </location>
</feature>